<name>YNU1_SHIFL</name>
<keyword id="KW-0614">Plasmid</keyword>
<proteinExistence type="predicted"/>
<protein>
    <recommendedName>
        <fullName>Uncharacterized 23.2 kDa protein in nuc 5'region</fullName>
    </recommendedName>
</protein>
<geneLocation type="plasmid">
    <name>IncW pSa</name>
</geneLocation>
<organism>
    <name type="scientific">Shigella flexneri</name>
    <dbReference type="NCBI Taxonomy" id="623"/>
    <lineage>
        <taxon>Bacteria</taxon>
        <taxon>Pseudomonadati</taxon>
        <taxon>Pseudomonadota</taxon>
        <taxon>Gammaproteobacteria</taxon>
        <taxon>Enterobacterales</taxon>
        <taxon>Enterobacteriaceae</taxon>
        <taxon>Shigella</taxon>
    </lineage>
</organism>
<feature type="chain" id="PRO_0000066346" description="Uncharacterized 23.2 kDa protein in nuc 5'region">
    <location>
        <begin position="1"/>
        <end position="209"/>
    </location>
</feature>
<dbReference type="EMBL" id="U30471">
    <property type="protein sequence ID" value="AAA75245.1"/>
    <property type="molecule type" value="Genomic_DNA"/>
</dbReference>
<dbReference type="PIR" id="S20540">
    <property type="entry name" value="S20540"/>
</dbReference>
<dbReference type="SMR" id="P29770"/>
<dbReference type="Gene3D" id="1.10.287.1490">
    <property type="match status" value="1"/>
</dbReference>
<dbReference type="InterPro" id="IPR021104">
    <property type="entry name" value="KfrA_DNA-bd_N"/>
</dbReference>
<dbReference type="Pfam" id="PF11740">
    <property type="entry name" value="KfrA_N"/>
    <property type="match status" value="1"/>
</dbReference>
<reference key="1">
    <citation type="journal article" date="1994" name="J. Bacteriol.">
        <title>Inhibition of Agrobacterium tumefaciens oncogenicity by the osa gene of pSa.</title>
        <authorList>
            <person name="Chen C.Y."/>
            <person name="Kado C.I."/>
        </authorList>
    </citation>
    <scope>NUCLEOTIDE SEQUENCE [GENOMIC DNA]</scope>
</reference>
<accession>P29770</accession>
<comment type="function">
    <text>May influence the expression of the nuc gene.</text>
</comment>
<sequence length="209" mass="23254">MAITKQDIWRAADELDAEGIRPTLAAVRKKLGSGSFTTISDAMAEWKNRKTATLPSSDPLPVAVNEHLAELGNALWAIALAHANARFDEDRKQIEADKAAISQQLAEAIELADTFTRENDQLRERVNQLEPMERERDKLADQLAEVKRRSGEELNRCMEKLTQRDNEAIEARKQAKEAIERAASLQGQVEALKEQVANLTAVLKTGGKQ</sequence>